<reference key="1">
    <citation type="journal article" date="2011" name="Stand. Genomic Sci.">
        <title>Complete genome sequence of 'Thioalkalivibrio sulfidophilus' HL-EbGr7.</title>
        <authorList>
            <person name="Muyzer G."/>
            <person name="Sorokin D.Y."/>
            <person name="Mavromatis K."/>
            <person name="Lapidus A."/>
            <person name="Clum A."/>
            <person name="Ivanova N."/>
            <person name="Pati A."/>
            <person name="d'Haeseleer P."/>
            <person name="Woyke T."/>
            <person name="Kyrpides N.C."/>
        </authorList>
    </citation>
    <scope>NUCLEOTIDE SEQUENCE [LARGE SCALE GENOMIC DNA]</scope>
    <source>
        <strain>HL-EbGR7</strain>
    </source>
</reference>
<evidence type="ECO:0000255" key="1">
    <source>
        <dbReference type="HAMAP-Rule" id="MF_00188"/>
    </source>
</evidence>
<protein>
    <recommendedName>
        <fullName evidence="1">Protease HtpX</fullName>
        <ecNumber evidence="1">3.4.24.-</ecNumber>
    </recommendedName>
    <alternativeName>
        <fullName evidence="1">Heat shock protein HtpX</fullName>
    </alternativeName>
</protein>
<sequence length="295" mass="32453">MKRIFLFLATNLAIIVVLSIVLRLLGVERILDESGTNLNLNALLIFAAVFGFGGSFISLAISKWMAKKTMRVHVIEQPRNSTEQWLLETVRRQAREAGIGMPEVGIFNSPDPNAFATGMSKNNALVAVSTGLMDRMNADEVEAVLGHEVAHVANGDMVTLALIQGVVNTFVIFLARVVGHFVDRVVFKNEQGHGPAFWITTIVAEIVFAILASIIVMWFSRQREFRADAGGARLAGREKMISALEKLRAVHTPSQMPDQMAAFGIRGGMGQGLKKLFMSHPPLEERIMALKAMQR</sequence>
<comment type="cofactor">
    <cofactor evidence="1">
        <name>Zn(2+)</name>
        <dbReference type="ChEBI" id="CHEBI:29105"/>
    </cofactor>
    <text evidence="1">Binds 1 zinc ion per subunit.</text>
</comment>
<comment type="subcellular location">
    <subcellularLocation>
        <location evidence="1">Cell inner membrane</location>
        <topology evidence="1">Multi-pass membrane protein</topology>
    </subcellularLocation>
</comment>
<comment type="similarity">
    <text evidence="1">Belongs to the peptidase M48B family.</text>
</comment>
<dbReference type="EC" id="3.4.24.-" evidence="1"/>
<dbReference type="EMBL" id="CP001339">
    <property type="protein sequence ID" value="ACL73198.1"/>
    <property type="molecule type" value="Genomic_DNA"/>
</dbReference>
<dbReference type="RefSeq" id="WP_012638676.1">
    <property type="nucleotide sequence ID" value="NC_011901.1"/>
</dbReference>
<dbReference type="SMR" id="B8GTV4"/>
<dbReference type="STRING" id="396588.Tgr7_2118"/>
<dbReference type="MEROPS" id="M48.002"/>
<dbReference type="KEGG" id="tgr:Tgr7_2118"/>
<dbReference type="eggNOG" id="COG0501">
    <property type="taxonomic scope" value="Bacteria"/>
</dbReference>
<dbReference type="HOGENOM" id="CLU_042266_1_0_6"/>
<dbReference type="OrthoDB" id="15218at2"/>
<dbReference type="Proteomes" id="UP000002383">
    <property type="component" value="Chromosome"/>
</dbReference>
<dbReference type="GO" id="GO:0005886">
    <property type="term" value="C:plasma membrane"/>
    <property type="evidence" value="ECO:0007669"/>
    <property type="project" value="UniProtKB-SubCell"/>
</dbReference>
<dbReference type="GO" id="GO:0004222">
    <property type="term" value="F:metalloendopeptidase activity"/>
    <property type="evidence" value="ECO:0007669"/>
    <property type="project" value="UniProtKB-UniRule"/>
</dbReference>
<dbReference type="GO" id="GO:0008270">
    <property type="term" value="F:zinc ion binding"/>
    <property type="evidence" value="ECO:0007669"/>
    <property type="project" value="UniProtKB-UniRule"/>
</dbReference>
<dbReference type="GO" id="GO:0006508">
    <property type="term" value="P:proteolysis"/>
    <property type="evidence" value="ECO:0007669"/>
    <property type="project" value="UniProtKB-KW"/>
</dbReference>
<dbReference type="CDD" id="cd07335">
    <property type="entry name" value="M48B_HtpX_like"/>
    <property type="match status" value="1"/>
</dbReference>
<dbReference type="Gene3D" id="3.30.2010.10">
    <property type="entry name" value="Metalloproteases ('zincins'), catalytic domain"/>
    <property type="match status" value="1"/>
</dbReference>
<dbReference type="HAMAP" id="MF_00188">
    <property type="entry name" value="Pept_M48_protease_HtpX"/>
    <property type="match status" value="1"/>
</dbReference>
<dbReference type="InterPro" id="IPR050083">
    <property type="entry name" value="HtpX_protease"/>
</dbReference>
<dbReference type="InterPro" id="IPR022919">
    <property type="entry name" value="Pept_M48_protease_HtpX"/>
</dbReference>
<dbReference type="InterPro" id="IPR001915">
    <property type="entry name" value="Peptidase_M48"/>
</dbReference>
<dbReference type="NCBIfam" id="NF003965">
    <property type="entry name" value="PRK05457.1"/>
    <property type="match status" value="1"/>
</dbReference>
<dbReference type="PANTHER" id="PTHR43221">
    <property type="entry name" value="PROTEASE HTPX"/>
    <property type="match status" value="1"/>
</dbReference>
<dbReference type="PANTHER" id="PTHR43221:SF1">
    <property type="entry name" value="PROTEASE HTPX"/>
    <property type="match status" value="1"/>
</dbReference>
<dbReference type="Pfam" id="PF01435">
    <property type="entry name" value="Peptidase_M48"/>
    <property type="match status" value="1"/>
</dbReference>
<proteinExistence type="inferred from homology"/>
<name>HTPX_THISH</name>
<gene>
    <name evidence="1" type="primary">htpX</name>
    <name type="ordered locus">Tgr7_2118</name>
</gene>
<organism>
    <name type="scientific">Thioalkalivibrio sulfidiphilus (strain HL-EbGR7)</name>
    <dbReference type="NCBI Taxonomy" id="396588"/>
    <lineage>
        <taxon>Bacteria</taxon>
        <taxon>Pseudomonadati</taxon>
        <taxon>Pseudomonadota</taxon>
        <taxon>Gammaproteobacteria</taxon>
        <taxon>Chromatiales</taxon>
        <taxon>Ectothiorhodospiraceae</taxon>
        <taxon>Thioalkalivibrio</taxon>
    </lineage>
</organism>
<keyword id="KW-0997">Cell inner membrane</keyword>
<keyword id="KW-1003">Cell membrane</keyword>
<keyword id="KW-0378">Hydrolase</keyword>
<keyword id="KW-0472">Membrane</keyword>
<keyword id="KW-0479">Metal-binding</keyword>
<keyword id="KW-0482">Metalloprotease</keyword>
<keyword id="KW-0645">Protease</keyword>
<keyword id="KW-1185">Reference proteome</keyword>
<keyword id="KW-0346">Stress response</keyword>
<keyword id="KW-0812">Transmembrane</keyword>
<keyword id="KW-1133">Transmembrane helix</keyword>
<keyword id="KW-0862">Zinc</keyword>
<accession>B8GTV4</accession>
<feature type="chain" id="PRO_1000192753" description="Protease HtpX">
    <location>
        <begin position="1"/>
        <end position="295"/>
    </location>
</feature>
<feature type="transmembrane region" description="Helical" evidence="1">
    <location>
        <begin position="4"/>
        <end position="24"/>
    </location>
</feature>
<feature type="transmembrane region" description="Helical" evidence="1">
    <location>
        <begin position="42"/>
        <end position="62"/>
    </location>
</feature>
<feature type="transmembrane region" description="Helical" evidence="1">
    <location>
        <begin position="155"/>
        <end position="175"/>
    </location>
</feature>
<feature type="transmembrane region" description="Helical" evidence="1">
    <location>
        <begin position="197"/>
        <end position="217"/>
    </location>
</feature>
<feature type="active site" evidence="1">
    <location>
        <position position="148"/>
    </location>
</feature>
<feature type="binding site" evidence="1">
    <location>
        <position position="147"/>
    </location>
    <ligand>
        <name>Zn(2+)</name>
        <dbReference type="ChEBI" id="CHEBI:29105"/>
        <note>catalytic</note>
    </ligand>
</feature>
<feature type="binding site" evidence="1">
    <location>
        <position position="151"/>
    </location>
    <ligand>
        <name>Zn(2+)</name>
        <dbReference type="ChEBI" id="CHEBI:29105"/>
        <note>catalytic</note>
    </ligand>
</feature>
<feature type="binding site" evidence="1">
    <location>
        <position position="224"/>
    </location>
    <ligand>
        <name>Zn(2+)</name>
        <dbReference type="ChEBI" id="CHEBI:29105"/>
        <note>catalytic</note>
    </ligand>
</feature>